<organism>
    <name type="scientific">Proteus mirabilis (strain HI4320)</name>
    <dbReference type="NCBI Taxonomy" id="529507"/>
    <lineage>
        <taxon>Bacteria</taxon>
        <taxon>Pseudomonadati</taxon>
        <taxon>Pseudomonadota</taxon>
        <taxon>Gammaproteobacteria</taxon>
        <taxon>Enterobacterales</taxon>
        <taxon>Morganellaceae</taxon>
        <taxon>Proteus</taxon>
    </lineage>
</organism>
<proteinExistence type="inferred from homology"/>
<keyword id="KW-1185">Reference proteome</keyword>
<keyword id="KW-0687">Ribonucleoprotein</keyword>
<keyword id="KW-0689">Ribosomal protein</keyword>
<gene>
    <name evidence="1" type="primary">rplM</name>
    <name type="ordered locus">PMI3669</name>
</gene>
<evidence type="ECO:0000255" key="1">
    <source>
        <dbReference type="HAMAP-Rule" id="MF_01366"/>
    </source>
</evidence>
<evidence type="ECO:0000305" key="2"/>
<sequence length="142" mass="15978">MKTFTAKPETVKRDWYVVDADGKTLGRLATEIARRLRGKHKAEYTPHVDTGDYIIVLNAEKVAVTGHKRTDKVYYRHTGHVGGIKQATFEEMIARSPERVIEIAVKGMLPKGPLGRAMYRKLKVYAGAEHNHAAQQPQVLDI</sequence>
<comment type="function">
    <text evidence="1">This protein is one of the early assembly proteins of the 50S ribosomal subunit, although it is not seen to bind rRNA by itself. It is important during the early stages of 50S assembly.</text>
</comment>
<comment type="subunit">
    <text evidence="1">Part of the 50S ribosomal subunit.</text>
</comment>
<comment type="similarity">
    <text evidence="1">Belongs to the universal ribosomal protein uL13 family.</text>
</comment>
<reference key="1">
    <citation type="journal article" date="2008" name="J. Bacteriol.">
        <title>Complete genome sequence of uropathogenic Proteus mirabilis, a master of both adherence and motility.</title>
        <authorList>
            <person name="Pearson M.M."/>
            <person name="Sebaihia M."/>
            <person name="Churcher C."/>
            <person name="Quail M.A."/>
            <person name="Seshasayee A.S."/>
            <person name="Luscombe N.M."/>
            <person name="Abdellah Z."/>
            <person name="Arrosmith C."/>
            <person name="Atkin B."/>
            <person name="Chillingworth T."/>
            <person name="Hauser H."/>
            <person name="Jagels K."/>
            <person name="Moule S."/>
            <person name="Mungall K."/>
            <person name="Norbertczak H."/>
            <person name="Rabbinowitsch E."/>
            <person name="Walker D."/>
            <person name="Whithead S."/>
            <person name="Thomson N.R."/>
            <person name="Rather P.N."/>
            <person name="Parkhill J."/>
            <person name="Mobley H.L.T."/>
        </authorList>
    </citation>
    <scope>NUCLEOTIDE SEQUENCE [LARGE SCALE GENOMIC DNA]</scope>
    <source>
        <strain>HI4320</strain>
    </source>
</reference>
<dbReference type="EMBL" id="AM942759">
    <property type="protein sequence ID" value="CAR47159.1"/>
    <property type="molecule type" value="Genomic_DNA"/>
</dbReference>
<dbReference type="RefSeq" id="WP_004245285.1">
    <property type="nucleotide sequence ID" value="NC_010554.1"/>
</dbReference>
<dbReference type="SMR" id="B4EXL9"/>
<dbReference type="EnsemblBacteria" id="CAR47159">
    <property type="protein sequence ID" value="CAR47159"/>
    <property type="gene ID" value="PMI3669"/>
</dbReference>
<dbReference type="GeneID" id="6802399"/>
<dbReference type="KEGG" id="pmr:PMI3669"/>
<dbReference type="eggNOG" id="COG0102">
    <property type="taxonomic scope" value="Bacteria"/>
</dbReference>
<dbReference type="HOGENOM" id="CLU_082184_2_2_6"/>
<dbReference type="Proteomes" id="UP000008319">
    <property type="component" value="Chromosome"/>
</dbReference>
<dbReference type="GO" id="GO:0022625">
    <property type="term" value="C:cytosolic large ribosomal subunit"/>
    <property type="evidence" value="ECO:0007669"/>
    <property type="project" value="TreeGrafter"/>
</dbReference>
<dbReference type="GO" id="GO:0003729">
    <property type="term" value="F:mRNA binding"/>
    <property type="evidence" value="ECO:0007669"/>
    <property type="project" value="TreeGrafter"/>
</dbReference>
<dbReference type="GO" id="GO:0003735">
    <property type="term" value="F:structural constituent of ribosome"/>
    <property type="evidence" value="ECO:0007669"/>
    <property type="project" value="InterPro"/>
</dbReference>
<dbReference type="GO" id="GO:0017148">
    <property type="term" value="P:negative regulation of translation"/>
    <property type="evidence" value="ECO:0007669"/>
    <property type="project" value="TreeGrafter"/>
</dbReference>
<dbReference type="GO" id="GO:0006412">
    <property type="term" value="P:translation"/>
    <property type="evidence" value="ECO:0007669"/>
    <property type="project" value="UniProtKB-UniRule"/>
</dbReference>
<dbReference type="CDD" id="cd00392">
    <property type="entry name" value="Ribosomal_L13"/>
    <property type="match status" value="1"/>
</dbReference>
<dbReference type="FunFam" id="3.90.1180.10:FF:000001">
    <property type="entry name" value="50S ribosomal protein L13"/>
    <property type="match status" value="1"/>
</dbReference>
<dbReference type="Gene3D" id="3.90.1180.10">
    <property type="entry name" value="Ribosomal protein L13"/>
    <property type="match status" value="1"/>
</dbReference>
<dbReference type="HAMAP" id="MF_01366">
    <property type="entry name" value="Ribosomal_uL13"/>
    <property type="match status" value="1"/>
</dbReference>
<dbReference type="InterPro" id="IPR005822">
    <property type="entry name" value="Ribosomal_uL13"/>
</dbReference>
<dbReference type="InterPro" id="IPR005823">
    <property type="entry name" value="Ribosomal_uL13_bac-type"/>
</dbReference>
<dbReference type="InterPro" id="IPR023563">
    <property type="entry name" value="Ribosomal_uL13_CS"/>
</dbReference>
<dbReference type="InterPro" id="IPR036899">
    <property type="entry name" value="Ribosomal_uL13_sf"/>
</dbReference>
<dbReference type="NCBIfam" id="TIGR01066">
    <property type="entry name" value="rplM_bact"/>
    <property type="match status" value="1"/>
</dbReference>
<dbReference type="PANTHER" id="PTHR11545:SF2">
    <property type="entry name" value="LARGE RIBOSOMAL SUBUNIT PROTEIN UL13M"/>
    <property type="match status" value="1"/>
</dbReference>
<dbReference type="PANTHER" id="PTHR11545">
    <property type="entry name" value="RIBOSOMAL PROTEIN L13"/>
    <property type="match status" value="1"/>
</dbReference>
<dbReference type="Pfam" id="PF00572">
    <property type="entry name" value="Ribosomal_L13"/>
    <property type="match status" value="1"/>
</dbReference>
<dbReference type="PIRSF" id="PIRSF002181">
    <property type="entry name" value="Ribosomal_L13"/>
    <property type="match status" value="1"/>
</dbReference>
<dbReference type="SUPFAM" id="SSF52161">
    <property type="entry name" value="Ribosomal protein L13"/>
    <property type="match status" value="1"/>
</dbReference>
<dbReference type="PROSITE" id="PS00783">
    <property type="entry name" value="RIBOSOMAL_L13"/>
    <property type="match status" value="1"/>
</dbReference>
<feature type="chain" id="PRO_1000144165" description="Large ribosomal subunit protein uL13">
    <location>
        <begin position="1"/>
        <end position="142"/>
    </location>
</feature>
<accession>B4EXL9</accession>
<name>RL13_PROMH</name>
<protein>
    <recommendedName>
        <fullName evidence="1">Large ribosomal subunit protein uL13</fullName>
    </recommendedName>
    <alternativeName>
        <fullName evidence="2">50S ribosomal protein L13</fullName>
    </alternativeName>
</protein>